<name>COMD5_MOUSE</name>
<reference key="1">
    <citation type="journal article" date="2005" name="Science">
        <title>The transcriptional landscape of the mammalian genome.</title>
        <authorList>
            <person name="Carninci P."/>
            <person name="Kasukawa T."/>
            <person name="Katayama S."/>
            <person name="Gough J."/>
            <person name="Frith M.C."/>
            <person name="Maeda N."/>
            <person name="Oyama R."/>
            <person name="Ravasi T."/>
            <person name="Lenhard B."/>
            <person name="Wells C."/>
            <person name="Kodzius R."/>
            <person name="Shimokawa K."/>
            <person name="Bajic V.B."/>
            <person name="Brenner S.E."/>
            <person name="Batalov S."/>
            <person name="Forrest A.R."/>
            <person name="Zavolan M."/>
            <person name="Davis M.J."/>
            <person name="Wilming L.G."/>
            <person name="Aidinis V."/>
            <person name="Allen J.E."/>
            <person name="Ambesi-Impiombato A."/>
            <person name="Apweiler R."/>
            <person name="Aturaliya R.N."/>
            <person name="Bailey T.L."/>
            <person name="Bansal M."/>
            <person name="Baxter L."/>
            <person name="Beisel K.W."/>
            <person name="Bersano T."/>
            <person name="Bono H."/>
            <person name="Chalk A.M."/>
            <person name="Chiu K.P."/>
            <person name="Choudhary V."/>
            <person name="Christoffels A."/>
            <person name="Clutterbuck D.R."/>
            <person name="Crowe M.L."/>
            <person name="Dalla E."/>
            <person name="Dalrymple B.P."/>
            <person name="de Bono B."/>
            <person name="Della Gatta G."/>
            <person name="di Bernardo D."/>
            <person name="Down T."/>
            <person name="Engstrom P."/>
            <person name="Fagiolini M."/>
            <person name="Faulkner G."/>
            <person name="Fletcher C.F."/>
            <person name="Fukushima T."/>
            <person name="Furuno M."/>
            <person name="Futaki S."/>
            <person name="Gariboldi M."/>
            <person name="Georgii-Hemming P."/>
            <person name="Gingeras T.R."/>
            <person name="Gojobori T."/>
            <person name="Green R.E."/>
            <person name="Gustincich S."/>
            <person name="Harbers M."/>
            <person name="Hayashi Y."/>
            <person name="Hensch T.K."/>
            <person name="Hirokawa N."/>
            <person name="Hill D."/>
            <person name="Huminiecki L."/>
            <person name="Iacono M."/>
            <person name="Ikeo K."/>
            <person name="Iwama A."/>
            <person name="Ishikawa T."/>
            <person name="Jakt M."/>
            <person name="Kanapin A."/>
            <person name="Katoh M."/>
            <person name="Kawasawa Y."/>
            <person name="Kelso J."/>
            <person name="Kitamura H."/>
            <person name="Kitano H."/>
            <person name="Kollias G."/>
            <person name="Krishnan S.P."/>
            <person name="Kruger A."/>
            <person name="Kummerfeld S.K."/>
            <person name="Kurochkin I.V."/>
            <person name="Lareau L.F."/>
            <person name="Lazarevic D."/>
            <person name="Lipovich L."/>
            <person name="Liu J."/>
            <person name="Liuni S."/>
            <person name="McWilliam S."/>
            <person name="Madan Babu M."/>
            <person name="Madera M."/>
            <person name="Marchionni L."/>
            <person name="Matsuda H."/>
            <person name="Matsuzawa S."/>
            <person name="Miki H."/>
            <person name="Mignone F."/>
            <person name="Miyake S."/>
            <person name="Morris K."/>
            <person name="Mottagui-Tabar S."/>
            <person name="Mulder N."/>
            <person name="Nakano N."/>
            <person name="Nakauchi H."/>
            <person name="Ng P."/>
            <person name="Nilsson R."/>
            <person name="Nishiguchi S."/>
            <person name="Nishikawa S."/>
            <person name="Nori F."/>
            <person name="Ohara O."/>
            <person name="Okazaki Y."/>
            <person name="Orlando V."/>
            <person name="Pang K.C."/>
            <person name="Pavan W.J."/>
            <person name="Pavesi G."/>
            <person name="Pesole G."/>
            <person name="Petrovsky N."/>
            <person name="Piazza S."/>
            <person name="Reed J."/>
            <person name="Reid J.F."/>
            <person name="Ring B.Z."/>
            <person name="Ringwald M."/>
            <person name="Rost B."/>
            <person name="Ruan Y."/>
            <person name="Salzberg S.L."/>
            <person name="Sandelin A."/>
            <person name="Schneider C."/>
            <person name="Schoenbach C."/>
            <person name="Sekiguchi K."/>
            <person name="Semple C.A."/>
            <person name="Seno S."/>
            <person name="Sessa L."/>
            <person name="Sheng Y."/>
            <person name="Shibata Y."/>
            <person name="Shimada H."/>
            <person name="Shimada K."/>
            <person name="Silva D."/>
            <person name="Sinclair B."/>
            <person name="Sperling S."/>
            <person name="Stupka E."/>
            <person name="Sugiura K."/>
            <person name="Sultana R."/>
            <person name="Takenaka Y."/>
            <person name="Taki K."/>
            <person name="Tammoja K."/>
            <person name="Tan S.L."/>
            <person name="Tang S."/>
            <person name="Taylor M.S."/>
            <person name="Tegner J."/>
            <person name="Teichmann S.A."/>
            <person name="Ueda H.R."/>
            <person name="van Nimwegen E."/>
            <person name="Verardo R."/>
            <person name="Wei C.L."/>
            <person name="Yagi K."/>
            <person name="Yamanishi H."/>
            <person name="Zabarovsky E."/>
            <person name="Zhu S."/>
            <person name="Zimmer A."/>
            <person name="Hide W."/>
            <person name="Bult C."/>
            <person name="Grimmond S.M."/>
            <person name="Teasdale R.D."/>
            <person name="Liu E.T."/>
            <person name="Brusic V."/>
            <person name="Quackenbush J."/>
            <person name="Wahlestedt C."/>
            <person name="Mattick J.S."/>
            <person name="Hume D.A."/>
            <person name="Kai C."/>
            <person name="Sasaki D."/>
            <person name="Tomaru Y."/>
            <person name="Fukuda S."/>
            <person name="Kanamori-Katayama M."/>
            <person name="Suzuki M."/>
            <person name="Aoki J."/>
            <person name="Arakawa T."/>
            <person name="Iida J."/>
            <person name="Imamura K."/>
            <person name="Itoh M."/>
            <person name="Kato T."/>
            <person name="Kawaji H."/>
            <person name="Kawagashira N."/>
            <person name="Kawashima T."/>
            <person name="Kojima M."/>
            <person name="Kondo S."/>
            <person name="Konno H."/>
            <person name="Nakano K."/>
            <person name="Ninomiya N."/>
            <person name="Nishio T."/>
            <person name="Okada M."/>
            <person name="Plessy C."/>
            <person name="Shibata K."/>
            <person name="Shiraki T."/>
            <person name="Suzuki S."/>
            <person name="Tagami M."/>
            <person name="Waki K."/>
            <person name="Watahiki A."/>
            <person name="Okamura-Oho Y."/>
            <person name="Suzuki H."/>
            <person name="Kawai J."/>
            <person name="Hayashizaki Y."/>
        </authorList>
    </citation>
    <scope>NUCLEOTIDE SEQUENCE [LARGE SCALE MRNA]</scope>
    <source>
        <strain>C57BL/6J</strain>
        <tissue>Tongue</tissue>
    </source>
</reference>
<reference key="2">
    <citation type="journal article" date="2004" name="Genome Res.">
        <title>The status, quality, and expansion of the NIH full-length cDNA project: the Mammalian Gene Collection (MGC).</title>
        <authorList>
            <consortium name="The MGC Project Team"/>
        </authorList>
    </citation>
    <scope>NUCLEOTIDE SEQUENCE [LARGE SCALE MRNA]</scope>
    <source>
        <strain>Czech II</strain>
        <tissue>Mammary tumor</tissue>
    </source>
</reference>
<reference key="3">
    <citation type="journal article" date="2010" name="Cell">
        <title>A tissue-specific atlas of mouse protein phosphorylation and expression.</title>
        <authorList>
            <person name="Huttlin E.L."/>
            <person name="Jedrychowski M.P."/>
            <person name="Elias J.E."/>
            <person name="Goswami T."/>
            <person name="Rad R."/>
            <person name="Beausoleil S.A."/>
            <person name="Villen J."/>
            <person name="Haas W."/>
            <person name="Sowa M.E."/>
            <person name="Gygi S.P."/>
        </authorList>
    </citation>
    <scope>IDENTIFICATION BY MASS SPECTROMETRY [LARGE SCALE ANALYSIS]</scope>
    <source>
        <tissue>Brain</tissue>
        <tissue>Brown adipose tissue</tissue>
        <tissue>Heart</tissue>
        <tissue>Kidney</tissue>
        <tissue>Liver</tissue>
        <tissue>Lung</tissue>
        <tissue>Pancreas</tissue>
        <tissue>Spleen</tissue>
        <tissue>Testis</tissue>
    </source>
</reference>
<protein>
    <recommendedName>
        <fullName>COMM domain-containing protein 5</fullName>
    </recommendedName>
</protein>
<feature type="initiator methionine" description="Removed" evidence="2">
    <location>
        <position position="1"/>
    </location>
</feature>
<feature type="chain" id="PRO_0000077396" description="COMM domain-containing protein 5">
    <location>
        <begin position="2"/>
        <end position="224"/>
    </location>
</feature>
<feature type="domain" description="COMM" evidence="3">
    <location>
        <begin position="151"/>
        <end position="215"/>
    </location>
</feature>
<feature type="region of interest" description="Disordered" evidence="4">
    <location>
        <begin position="1"/>
        <end position="24"/>
    </location>
</feature>
<feature type="modified residue" description="N-acetylserine" evidence="2">
    <location>
        <position position="2"/>
    </location>
</feature>
<feature type="sequence conflict" description="In Ref. 1; BAB26663." evidence="5" ref="1">
    <original>P</original>
    <variation>A</variation>
    <location>
        <position position="7"/>
    </location>
</feature>
<gene>
    <name type="primary">Commd5</name>
</gene>
<sequence length="224" mass="24493">MSALGAPAPYLHHPTDSHSGRVSFLGSQPSAEVTAVAQLLKDLDRSTFRKLLKLVVGALHGKDCREAVQHLGASANLSEERLAVLLAGTHTLLQQALRLPPASLKPDAFQDELQELGIPQDMIGDLASLAFGSQRPLLDSVAQQQGSSLPRVSNFRWRVDVAISTSAQSRSLQPSVLMQLKLTDGSAHRFEVPIAKFQELRYSVALVLKEMAELERKCERKLQD</sequence>
<proteinExistence type="evidence at protein level"/>
<keyword id="KW-0007">Acetylation</keyword>
<keyword id="KW-0963">Cytoplasm</keyword>
<keyword id="KW-0539">Nucleus</keyword>
<keyword id="KW-1185">Reference proteome</keyword>
<keyword id="KW-0804">Transcription</keyword>
<keyword id="KW-0805">Transcription regulation</keyword>
<keyword id="KW-0833">Ubl conjugation pathway</keyword>
<organism>
    <name type="scientific">Mus musculus</name>
    <name type="common">Mouse</name>
    <dbReference type="NCBI Taxonomy" id="10090"/>
    <lineage>
        <taxon>Eukaryota</taxon>
        <taxon>Metazoa</taxon>
        <taxon>Chordata</taxon>
        <taxon>Craniata</taxon>
        <taxon>Vertebrata</taxon>
        <taxon>Euteleostomi</taxon>
        <taxon>Mammalia</taxon>
        <taxon>Eutheria</taxon>
        <taxon>Euarchontoglires</taxon>
        <taxon>Glires</taxon>
        <taxon>Rodentia</taxon>
        <taxon>Myomorpha</taxon>
        <taxon>Muroidea</taxon>
        <taxon>Muridae</taxon>
        <taxon>Murinae</taxon>
        <taxon>Mus</taxon>
        <taxon>Mus</taxon>
    </lineage>
</organism>
<comment type="function">
    <text evidence="1 2">Scaffold protein in the commander complex that is essential for endosomal recycling of transmembrane cargos; the commander complex is composed of the CCC subcomplex and the retriever subcomplex (By similarity). May modulate activity of cullin-RING E3 ubiquitin ligase (CRL) complexes (By similarity). Negatively regulates cell proliferation (By similarity). Negatively regulates cell cycle G2/M phase transition probably by transactivating p21/CDKN1A through the p53/TP53-independent signaling pathway (By similarity). Involved in kidney proximal tubule morphogenesis (By similarity). Down-regulates activation of NF-kappa-B (By similarity).</text>
</comment>
<comment type="subunit">
    <text evidence="2">Component of the commander complex consisting of the CCC subcomplex and the retriever subcomplex (By similarity). Component of the CCC (COMMD/CCDC22/CCDC93) subcomplex consisting of COMMD1, COMMD2, COMMD3, COMMD4, COMMD5, COMMD6, COMMD7, COMMD8, COMMD9, COMMD10, CCDC22 and CCDC93; within the complex forms a heterodimer with COMMD10 (By similarity). Interacts (via COMM domain) with COMMD1 (via COMM domain). Interacts with RELA, RELB, NFKB1/p105 (By similarity). Interacts with CCDC22, CCDC93, SCNN1B, CUL2, CUL3, CUL4A, CUL4B, CUL7 (By similarity).</text>
</comment>
<comment type="subcellular location">
    <subcellularLocation>
        <location evidence="2">Nucleus</location>
    </subcellularLocation>
    <subcellularLocation>
        <location evidence="2">Cytoplasm</location>
    </subcellularLocation>
</comment>
<comment type="similarity">
    <text evidence="5">Belongs to the COMM domain-containing protein 5 family.</text>
</comment>
<evidence type="ECO:0000250" key="1">
    <source>
        <dbReference type="UniProtKB" id="Q9ERR2"/>
    </source>
</evidence>
<evidence type="ECO:0000250" key="2">
    <source>
        <dbReference type="UniProtKB" id="Q9GZQ3"/>
    </source>
</evidence>
<evidence type="ECO:0000255" key="3">
    <source>
        <dbReference type="PROSITE-ProRule" id="PRU00602"/>
    </source>
</evidence>
<evidence type="ECO:0000256" key="4">
    <source>
        <dbReference type="SAM" id="MobiDB-lite"/>
    </source>
</evidence>
<evidence type="ECO:0000305" key="5"/>
<accession>Q8R395</accession>
<accession>Q9D6R8</accession>
<dbReference type="EMBL" id="AK010045">
    <property type="protein sequence ID" value="BAB26663.1"/>
    <property type="molecule type" value="mRNA"/>
</dbReference>
<dbReference type="EMBL" id="BC025891">
    <property type="protein sequence ID" value="AAH25891.1"/>
    <property type="molecule type" value="mRNA"/>
</dbReference>
<dbReference type="CCDS" id="CCDS27594.1"/>
<dbReference type="RefSeq" id="NP_079812.1">
    <property type="nucleotide sequence ID" value="NM_025536.2"/>
</dbReference>
<dbReference type="SMR" id="Q8R395"/>
<dbReference type="BioGRID" id="211442">
    <property type="interactions" value="5"/>
</dbReference>
<dbReference type="FunCoup" id="Q8R395">
    <property type="interactions" value="1838"/>
</dbReference>
<dbReference type="STRING" id="10090.ENSMUSP00000069159"/>
<dbReference type="iPTMnet" id="Q8R395"/>
<dbReference type="PhosphoSitePlus" id="Q8R395"/>
<dbReference type="jPOST" id="Q8R395"/>
<dbReference type="PaxDb" id="10090-ENSMUSP00000069159"/>
<dbReference type="PeptideAtlas" id="Q8R395"/>
<dbReference type="ProteomicsDB" id="283789"/>
<dbReference type="Pumba" id="Q8R395"/>
<dbReference type="DNASU" id="66398"/>
<dbReference type="GeneID" id="66398"/>
<dbReference type="KEGG" id="mmu:66398"/>
<dbReference type="UCSC" id="uc007wms.1">
    <property type="organism name" value="mouse"/>
</dbReference>
<dbReference type="AGR" id="MGI:1913648"/>
<dbReference type="CTD" id="28991"/>
<dbReference type="MGI" id="MGI:1913648">
    <property type="gene designation" value="Commd5"/>
</dbReference>
<dbReference type="eggNOG" id="ENOG502RCJ6">
    <property type="taxonomic scope" value="Eukaryota"/>
</dbReference>
<dbReference type="InParanoid" id="Q8R395"/>
<dbReference type="OrthoDB" id="203754at2759"/>
<dbReference type="PhylomeDB" id="Q8R395"/>
<dbReference type="TreeFam" id="TF323880"/>
<dbReference type="Reactome" id="R-MMU-8951664">
    <property type="pathway name" value="Neddylation"/>
</dbReference>
<dbReference type="BioGRID-ORCS" id="66398">
    <property type="hits" value="8 hits in 76 CRISPR screens"/>
</dbReference>
<dbReference type="ChiTaRS" id="Commd5">
    <property type="organism name" value="mouse"/>
</dbReference>
<dbReference type="PRO" id="PR:Q8R395"/>
<dbReference type="Proteomes" id="UP000000589">
    <property type="component" value="Unplaced"/>
</dbReference>
<dbReference type="RNAct" id="Q8R395">
    <property type="molecule type" value="protein"/>
</dbReference>
<dbReference type="GO" id="GO:0005737">
    <property type="term" value="C:cytoplasm"/>
    <property type="evidence" value="ECO:0007669"/>
    <property type="project" value="UniProtKB-SubCell"/>
</dbReference>
<dbReference type="GO" id="GO:0005634">
    <property type="term" value="C:nucleus"/>
    <property type="evidence" value="ECO:0000266"/>
    <property type="project" value="MGI"/>
</dbReference>
<dbReference type="CDD" id="cd04753">
    <property type="entry name" value="Commd5_HCaRG"/>
    <property type="match status" value="1"/>
</dbReference>
<dbReference type="InterPro" id="IPR017920">
    <property type="entry name" value="COMM"/>
</dbReference>
<dbReference type="InterPro" id="IPR037357">
    <property type="entry name" value="COMMD5"/>
</dbReference>
<dbReference type="PANTHER" id="PTHR15666">
    <property type="entry name" value="COMM DOMAIN CONTAINING PROTEIN 5"/>
    <property type="match status" value="1"/>
</dbReference>
<dbReference type="PANTHER" id="PTHR15666:SF1">
    <property type="entry name" value="COMM DOMAIN-CONTAINING PROTEIN 5"/>
    <property type="match status" value="1"/>
</dbReference>
<dbReference type="Pfam" id="PF07258">
    <property type="entry name" value="COMM_domain"/>
    <property type="match status" value="1"/>
</dbReference>
<dbReference type="Pfam" id="PF21672">
    <property type="entry name" value="COMM_HN"/>
    <property type="match status" value="1"/>
</dbReference>
<dbReference type="PROSITE" id="PS51269">
    <property type="entry name" value="COMM"/>
    <property type="match status" value="1"/>
</dbReference>